<comment type="function">
    <text evidence="1">Formation of pseudouridine at positions 38, 39 and 40 in the anticodon stem and loop of transfer RNAs.</text>
</comment>
<comment type="catalytic activity">
    <reaction evidence="1">
        <text>uridine(38/39/40) in tRNA = pseudouridine(38/39/40) in tRNA</text>
        <dbReference type="Rhea" id="RHEA:22376"/>
        <dbReference type="Rhea" id="RHEA-COMP:10085"/>
        <dbReference type="Rhea" id="RHEA-COMP:10087"/>
        <dbReference type="ChEBI" id="CHEBI:65314"/>
        <dbReference type="ChEBI" id="CHEBI:65315"/>
        <dbReference type="EC" id="5.4.99.12"/>
    </reaction>
</comment>
<comment type="subunit">
    <text evidence="1">Homodimer.</text>
</comment>
<comment type="similarity">
    <text evidence="1">Belongs to the tRNA pseudouridine synthase TruA family.</text>
</comment>
<evidence type="ECO:0000255" key="1">
    <source>
        <dbReference type="HAMAP-Rule" id="MF_00171"/>
    </source>
</evidence>
<evidence type="ECO:0000305" key="2"/>
<proteinExistence type="inferred from homology"/>
<keyword id="KW-0413">Isomerase</keyword>
<keyword id="KW-1185">Reference proteome</keyword>
<keyword id="KW-0819">tRNA processing</keyword>
<protein>
    <recommendedName>
        <fullName evidence="1">tRNA pseudouridine synthase A</fullName>
        <ecNumber evidence="1">5.4.99.12</ecNumber>
    </recommendedName>
    <alternativeName>
        <fullName evidence="1">tRNA pseudouridine(38-40) synthase</fullName>
    </alternativeName>
    <alternativeName>
        <fullName evidence="1">tRNA pseudouridylate synthase I</fullName>
    </alternativeName>
    <alternativeName>
        <fullName evidence="1">tRNA-uridine isomerase I</fullName>
    </alternativeName>
</protein>
<sequence>MNRYRLTVEFDGRNFMGWQRQKHGATIQGSIEEAGASIAGQPTPVQAAGRTDAGVHGLAMTAHIDVARDFTPFRLMEALNARLKPRPIAILSCEQVDPEWHARFSCIGRRYLYRIINRRPPLTLEAGRAWHVIKPLDAETMDIAAKRLIGLHDFTTFRSVHCQSKSPVKTLDHLDVRRIGDQIEITAAARSFLHHQVRSMVGCLVLVGQGQWTADDMTTALEARNRAALGFNAPPDGLYFTQAIY</sequence>
<feature type="chain" id="PRO_0000057498" description="tRNA pseudouridine synthase A">
    <location>
        <begin position="1"/>
        <end position="245"/>
    </location>
</feature>
<feature type="active site" description="Nucleophile" evidence="1">
    <location>
        <position position="52"/>
    </location>
</feature>
<feature type="binding site" evidence="1">
    <location>
        <position position="111"/>
    </location>
    <ligand>
        <name>substrate</name>
    </ligand>
</feature>
<feature type="sequence conflict" description="In Ref. 1; AAF23795." evidence="2" ref="1">
    <original>Q</original>
    <variation>K</variation>
    <location>
        <position position="21"/>
    </location>
</feature>
<reference key="1">
    <citation type="submission" date="1999-12" db="EMBL/GenBank/DDBJ databases">
        <authorList>
            <person name="Um H.W."/>
            <person name="Kang H.S."/>
        </authorList>
    </citation>
    <scope>NUCLEOTIDE SEQUENCE [GENOMIC DNA]</scope>
    <source>
        <strain>ATCC 31821 / ZM4 / CP4</strain>
    </source>
</reference>
<reference key="2">
    <citation type="journal article" date="2005" name="Nat. Biotechnol.">
        <title>The genome sequence of the ethanologenic bacterium Zymomonas mobilis ZM4.</title>
        <authorList>
            <person name="Seo J.-S."/>
            <person name="Chong H."/>
            <person name="Park H.S."/>
            <person name="Yoon K.-O."/>
            <person name="Jung C."/>
            <person name="Kim J.J."/>
            <person name="Hong J.H."/>
            <person name="Kim H."/>
            <person name="Kim J.-H."/>
            <person name="Kil J.-I."/>
            <person name="Park C.J."/>
            <person name="Oh H.-M."/>
            <person name="Lee J.-S."/>
            <person name="Jin S.-J."/>
            <person name="Um H.-W."/>
            <person name="Lee H.-J."/>
            <person name="Oh S.-J."/>
            <person name="Kim J.Y."/>
            <person name="Kang H.L."/>
            <person name="Lee S.Y."/>
            <person name="Lee K.J."/>
            <person name="Kang H.S."/>
        </authorList>
    </citation>
    <scope>NUCLEOTIDE SEQUENCE [LARGE SCALE GENOMIC DNA]</scope>
    <source>
        <strain>ATCC 31821 / ZM4 / CP4</strain>
    </source>
</reference>
<dbReference type="EC" id="5.4.99.12" evidence="1"/>
<dbReference type="EMBL" id="AF213822">
    <property type="protein sequence ID" value="AAF23795.1"/>
    <property type="molecule type" value="Genomic_DNA"/>
</dbReference>
<dbReference type="EMBL" id="AE008692">
    <property type="protein sequence ID" value="AAV89434.1"/>
    <property type="molecule type" value="Genomic_DNA"/>
</dbReference>
<dbReference type="RefSeq" id="WP_011240682.1">
    <property type="nucleotide sequence ID" value="NZ_CP035711.1"/>
</dbReference>
<dbReference type="SMR" id="Q9REQ0"/>
<dbReference type="STRING" id="264203.ZMO0810"/>
<dbReference type="GeneID" id="79904030"/>
<dbReference type="KEGG" id="zmo:ZMO0810"/>
<dbReference type="eggNOG" id="COG0101">
    <property type="taxonomic scope" value="Bacteria"/>
</dbReference>
<dbReference type="HOGENOM" id="CLU_014673_0_2_5"/>
<dbReference type="Proteomes" id="UP000001173">
    <property type="component" value="Chromosome"/>
</dbReference>
<dbReference type="GO" id="GO:0003723">
    <property type="term" value="F:RNA binding"/>
    <property type="evidence" value="ECO:0007669"/>
    <property type="project" value="InterPro"/>
</dbReference>
<dbReference type="GO" id="GO:0160147">
    <property type="term" value="F:tRNA pseudouridine(38-40) synthase activity"/>
    <property type="evidence" value="ECO:0007669"/>
    <property type="project" value="UniProtKB-EC"/>
</dbReference>
<dbReference type="GO" id="GO:0031119">
    <property type="term" value="P:tRNA pseudouridine synthesis"/>
    <property type="evidence" value="ECO:0007669"/>
    <property type="project" value="UniProtKB-UniRule"/>
</dbReference>
<dbReference type="CDD" id="cd02570">
    <property type="entry name" value="PseudoU_synth_EcTruA"/>
    <property type="match status" value="1"/>
</dbReference>
<dbReference type="FunFam" id="3.30.70.580:FF:000001">
    <property type="entry name" value="tRNA pseudouridine synthase A"/>
    <property type="match status" value="1"/>
</dbReference>
<dbReference type="Gene3D" id="3.30.70.660">
    <property type="entry name" value="Pseudouridine synthase I, catalytic domain, C-terminal subdomain"/>
    <property type="match status" value="1"/>
</dbReference>
<dbReference type="Gene3D" id="3.30.70.580">
    <property type="entry name" value="Pseudouridine synthase I, catalytic domain, N-terminal subdomain"/>
    <property type="match status" value="1"/>
</dbReference>
<dbReference type="HAMAP" id="MF_00171">
    <property type="entry name" value="TruA"/>
    <property type="match status" value="1"/>
</dbReference>
<dbReference type="InterPro" id="IPR020103">
    <property type="entry name" value="PsdUridine_synth_cat_dom_sf"/>
</dbReference>
<dbReference type="InterPro" id="IPR001406">
    <property type="entry name" value="PsdUridine_synth_TruA"/>
</dbReference>
<dbReference type="InterPro" id="IPR020097">
    <property type="entry name" value="PsdUridine_synth_TruA_a/b_dom"/>
</dbReference>
<dbReference type="InterPro" id="IPR020095">
    <property type="entry name" value="PsdUridine_synth_TruA_C"/>
</dbReference>
<dbReference type="InterPro" id="IPR020094">
    <property type="entry name" value="TruA/RsuA/RluB/E/F_N"/>
</dbReference>
<dbReference type="NCBIfam" id="TIGR00071">
    <property type="entry name" value="hisT_truA"/>
    <property type="match status" value="1"/>
</dbReference>
<dbReference type="PANTHER" id="PTHR11142">
    <property type="entry name" value="PSEUDOURIDYLATE SYNTHASE"/>
    <property type="match status" value="1"/>
</dbReference>
<dbReference type="PANTHER" id="PTHR11142:SF0">
    <property type="entry name" value="TRNA PSEUDOURIDINE SYNTHASE-LIKE 1"/>
    <property type="match status" value="1"/>
</dbReference>
<dbReference type="Pfam" id="PF01416">
    <property type="entry name" value="PseudoU_synth_1"/>
    <property type="match status" value="2"/>
</dbReference>
<dbReference type="PIRSF" id="PIRSF001430">
    <property type="entry name" value="tRNA_psdUrid_synth"/>
    <property type="match status" value="1"/>
</dbReference>
<dbReference type="SUPFAM" id="SSF55120">
    <property type="entry name" value="Pseudouridine synthase"/>
    <property type="match status" value="1"/>
</dbReference>
<accession>Q9REQ0</accession>
<accession>Q5NPC6</accession>
<gene>
    <name evidence="1" type="primary">truA</name>
    <name type="synonym">rulA</name>
    <name type="ordered locus">ZMO0810</name>
</gene>
<organism>
    <name type="scientific">Zymomonas mobilis subsp. mobilis (strain ATCC 31821 / ZM4 / CP4)</name>
    <dbReference type="NCBI Taxonomy" id="264203"/>
    <lineage>
        <taxon>Bacteria</taxon>
        <taxon>Pseudomonadati</taxon>
        <taxon>Pseudomonadota</taxon>
        <taxon>Alphaproteobacteria</taxon>
        <taxon>Sphingomonadales</taxon>
        <taxon>Zymomonadaceae</taxon>
        <taxon>Zymomonas</taxon>
    </lineage>
</organism>
<name>TRUA_ZYMMO</name>